<gene>
    <name type="primary">chrna3</name>
</gene>
<sequence>MNSASRITLFFLLTVLITQECLSSKGEDRLFRRLFRRYNQFIRPVENVSDPVTVEFEVSISQLVKVDEVNQIMETNLWLRHIWNDYKLKWLPAEFDGIEFIRVPSNKIWRPDIVLYNNAVGDFLVEDKTKALLKYDGTITWVPPAIFKSSCPMDITYFPFDYQNCSMKFGSWTYDKAKIDLVLIGSKVNLKDFWESGEWEIIDAPGYKHDIKYNCCEEIYPDITYSFYIRRLPLFYTINLIIPCLLISFLTILVFYLPSDCGEKVTLCISVLLSLTVFLLVITETIPSTSLVIPLIGEYLLFTMIFVTLSIVITVFVLNVHYRTPMTHTMPSWVRTVFLRALPRVMLMRRPIDLSESSGKGGGEIAGSSGTGGGRGAEGKKMKSSASQQGAMNSLEFGEGKAALEGKKGGCPCHPIKEAIEGDCGKVSRQLTPQAINTVVTFSVVSPEIKQAIESVKYIAENMRSRNKAKEVEDDWKYVAMVIDRIFLWVFVLVCVLGTLGLFLQPLIGFFS</sequence>
<dbReference type="EMBL" id="X54051">
    <property type="protein sequence ID" value="CAA37985.1"/>
    <property type="molecule type" value="mRNA"/>
</dbReference>
<dbReference type="PIR" id="S11230">
    <property type="entry name" value="B37014"/>
</dbReference>
<dbReference type="SMR" id="P18845"/>
<dbReference type="GlyCosmos" id="P18845">
    <property type="glycosylation" value="2 sites, No reported glycans"/>
</dbReference>
<dbReference type="OrthoDB" id="5975154at2759"/>
<dbReference type="Proteomes" id="UP000515129">
    <property type="component" value="Unplaced"/>
</dbReference>
<dbReference type="GO" id="GO:0005892">
    <property type="term" value="C:acetylcholine-gated channel complex"/>
    <property type="evidence" value="ECO:0000250"/>
    <property type="project" value="UniProtKB"/>
</dbReference>
<dbReference type="GO" id="GO:0005783">
    <property type="term" value="C:endoplasmic reticulum"/>
    <property type="evidence" value="ECO:0007669"/>
    <property type="project" value="UniProtKB-SubCell"/>
</dbReference>
<dbReference type="GO" id="GO:0005794">
    <property type="term" value="C:Golgi apparatus"/>
    <property type="evidence" value="ECO:0007669"/>
    <property type="project" value="UniProtKB-SubCell"/>
</dbReference>
<dbReference type="GO" id="GO:0045211">
    <property type="term" value="C:postsynaptic membrane"/>
    <property type="evidence" value="ECO:0007669"/>
    <property type="project" value="UniProtKB-KW"/>
</dbReference>
<dbReference type="GO" id="GO:0015464">
    <property type="term" value="F:acetylcholine receptor activity"/>
    <property type="evidence" value="ECO:0000250"/>
    <property type="project" value="UniProtKB"/>
</dbReference>
<dbReference type="GO" id="GO:0022848">
    <property type="term" value="F:acetylcholine-gated monoatomic cation-selective channel activity"/>
    <property type="evidence" value="ECO:0000250"/>
    <property type="project" value="UniProtKB"/>
</dbReference>
<dbReference type="GO" id="GO:0035095">
    <property type="term" value="P:behavioral response to nicotine"/>
    <property type="evidence" value="ECO:0000250"/>
    <property type="project" value="UniProtKB"/>
</dbReference>
<dbReference type="GO" id="GO:0007399">
    <property type="term" value="P:nervous system development"/>
    <property type="evidence" value="ECO:0000250"/>
    <property type="project" value="UniProtKB"/>
</dbReference>
<dbReference type="GO" id="GO:0007165">
    <property type="term" value="P:signal transduction"/>
    <property type="evidence" value="ECO:0000250"/>
    <property type="project" value="UniProtKB"/>
</dbReference>
<dbReference type="GO" id="GO:0060084">
    <property type="term" value="P:synaptic transmission involved in micturition"/>
    <property type="evidence" value="ECO:0000250"/>
    <property type="project" value="UniProtKB"/>
</dbReference>
<dbReference type="CDD" id="cd19016">
    <property type="entry name" value="LGIC_ECD_nAChR_A3"/>
    <property type="match status" value="1"/>
</dbReference>
<dbReference type="CDD" id="cd19064">
    <property type="entry name" value="LGIC_TM_nAChR"/>
    <property type="match status" value="1"/>
</dbReference>
<dbReference type="FunFam" id="2.70.170.10:FF:000008">
    <property type="entry name" value="Cholinergic receptor nicotinic alpha 6 subunit"/>
    <property type="match status" value="1"/>
</dbReference>
<dbReference type="FunFam" id="1.20.58.390:FF:000051">
    <property type="entry name" value="Cholinergic receptor, nicotinic, alpha 6"/>
    <property type="match status" value="1"/>
</dbReference>
<dbReference type="FunFam" id="1.20.58.390:FF:000001">
    <property type="entry name" value="Neuronal nicotinic acetylcholine receptor subunit 3"/>
    <property type="match status" value="1"/>
</dbReference>
<dbReference type="Gene3D" id="2.70.170.10">
    <property type="entry name" value="Neurotransmitter-gated ion-channel ligand-binding domain"/>
    <property type="match status" value="1"/>
</dbReference>
<dbReference type="Gene3D" id="1.20.58.390">
    <property type="entry name" value="Neurotransmitter-gated ion-channel transmembrane domain"/>
    <property type="match status" value="2"/>
</dbReference>
<dbReference type="InterPro" id="IPR006202">
    <property type="entry name" value="Neur_chan_lig-bd"/>
</dbReference>
<dbReference type="InterPro" id="IPR036734">
    <property type="entry name" value="Neur_chan_lig-bd_sf"/>
</dbReference>
<dbReference type="InterPro" id="IPR006201">
    <property type="entry name" value="Neur_channel"/>
</dbReference>
<dbReference type="InterPro" id="IPR036719">
    <property type="entry name" value="Neuro-gated_channel_TM_sf"/>
</dbReference>
<dbReference type="InterPro" id="IPR038050">
    <property type="entry name" value="Neuro_actylchol_rec"/>
</dbReference>
<dbReference type="InterPro" id="IPR006029">
    <property type="entry name" value="Neurotrans-gated_channel_TM"/>
</dbReference>
<dbReference type="InterPro" id="IPR018000">
    <property type="entry name" value="Neurotransmitter_ion_chnl_CS"/>
</dbReference>
<dbReference type="InterPro" id="IPR002394">
    <property type="entry name" value="Nicotinic_acetylcholine_rcpt"/>
</dbReference>
<dbReference type="NCBIfam" id="TIGR00860">
    <property type="entry name" value="LIC"/>
    <property type="match status" value="1"/>
</dbReference>
<dbReference type="PANTHER" id="PTHR18945">
    <property type="entry name" value="NEUROTRANSMITTER GATED ION CHANNEL"/>
    <property type="match status" value="1"/>
</dbReference>
<dbReference type="Pfam" id="PF02931">
    <property type="entry name" value="Neur_chan_LBD"/>
    <property type="match status" value="1"/>
</dbReference>
<dbReference type="Pfam" id="PF02932">
    <property type="entry name" value="Neur_chan_memb"/>
    <property type="match status" value="1"/>
</dbReference>
<dbReference type="PRINTS" id="PR00254">
    <property type="entry name" value="NICOTINICR"/>
</dbReference>
<dbReference type="PRINTS" id="PR00252">
    <property type="entry name" value="NRIONCHANNEL"/>
</dbReference>
<dbReference type="SUPFAM" id="SSF90112">
    <property type="entry name" value="Neurotransmitter-gated ion-channel transmembrane pore"/>
    <property type="match status" value="1"/>
</dbReference>
<dbReference type="SUPFAM" id="SSF63712">
    <property type="entry name" value="Nicotinic receptor ligand binding domain-like"/>
    <property type="match status" value="1"/>
</dbReference>
<dbReference type="PROSITE" id="PS00236">
    <property type="entry name" value="NEUROTR_ION_CHANNEL"/>
    <property type="match status" value="1"/>
</dbReference>
<accession>P18845</accession>
<reference key="1">
    <citation type="journal article" date="1990" name="Nucleic Acids Res.">
        <title>Nucleotide and deduced amino acid sequence of the goldfish neural nicotinic acetylcholine receptor alpha-3 subunit.</title>
        <authorList>
            <person name="Hieber V.C."/>
            <person name="Bouchey J.E."/>
            <person name="Agranoff B.W."/>
            <person name="Goldman D."/>
        </authorList>
    </citation>
    <scope>NUCLEOTIDE SEQUENCE [MRNA]</scope>
    <source>
        <tissue>Retina</tissue>
    </source>
</reference>
<reference key="2">
    <citation type="journal article" date="1990" name="J. Neurosci.">
        <title>Multiple nicotinic acetylcholine receptor genes are expressed in goldfish retina and tectum.</title>
        <authorList>
            <person name="Cauley K."/>
            <person name="Agranoff B.W."/>
            <person name="Goldman D."/>
        </authorList>
    </citation>
    <scope>TISSUE SPECIFICITY</scope>
</reference>
<feature type="signal peptide" evidence="6">
    <location>
        <begin position="1"/>
        <end position="23"/>
    </location>
</feature>
<feature type="chain" id="PRO_0000000350" description="Neuronal acetylcholine receptor subunit alpha-3">
    <location>
        <begin position="24"/>
        <end position="512"/>
    </location>
</feature>
<feature type="topological domain" description="Extracellular" evidence="3">
    <location>
        <begin position="24"/>
        <end position="242"/>
    </location>
</feature>
<feature type="transmembrane region" description="Helical" evidence="3">
    <location>
        <begin position="243"/>
        <end position="258"/>
    </location>
</feature>
<feature type="topological domain" description="Cytoplasmic" evidence="3">
    <location>
        <begin position="259"/>
        <end position="260"/>
    </location>
</feature>
<feature type="transmembrane region" description="Helical" evidence="3">
    <location>
        <begin position="261"/>
        <end position="277"/>
    </location>
</feature>
<feature type="topological domain" description="Extracellular" evidence="3">
    <location>
        <begin position="278"/>
        <end position="299"/>
    </location>
</feature>
<feature type="transmembrane region" description="Helical" evidence="3">
    <location>
        <begin position="300"/>
        <end position="318"/>
    </location>
</feature>
<feature type="topological domain" description="Cytoplasmic" evidence="3">
    <location>
        <begin position="319"/>
        <end position="482"/>
    </location>
</feature>
<feature type="transmembrane region" description="Helical" evidence="3">
    <location>
        <begin position="483"/>
        <end position="501"/>
    </location>
</feature>
<feature type="topological domain" description="Extracellular" evidence="3">
    <location>
        <begin position="502"/>
        <end position="512"/>
    </location>
</feature>
<feature type="region of interest" description="Disordered" evidence="7">
    <location>
        <begin position="356"/>
        <end position="389"/>
    </location>
</feature>
<feature type="compositionally biased region" description="Gly residues" evidence="7">
    <location>
        <begin position="359"/>
        <end position="376"/>
    </location>
</feature>
<feature type="binding site" evidence="3">
    <location>
        <position position="263"/>
    </location>
    <ligand>
        <name>Na(+)</name>
        <dbReference type="ChEBI" id="CHEBI:29101"/>
    </ligand>
</feature>
<feature type="glycosylation site" description="N-linked (GlcNAc...) asparagine" evidence="6">
    <location>
        <position position="47"/>
    </location>
</feature>
<feature type="glycosylation site" description="N-linked (GlcNAc...) asparagine" evidence="6">
    <location>
        <position position="164"/>
    </location>
</feature>
<feature type="disulfide bond" evidence="3">
    <location>
        <begin position="151"/>
        <end position="165"/>
    </location>
</feature>
<feature type="disulfide bond" description="Associated with receptor activation" evidence="3">
    <location>
        <begin position="215"/>
        <end position="216"/>
    </location>
</feature>
<organism>
    <name type="scientific">Carassius auratus</name>
    <name type="common">Goldfish</name>
    <dbReference type="NCBI Taxonomy" id="7957"/>
    <lineage>
        <taxon>Eukaryota</taxon>
        <taxon>Metazoa</taxon>
        <taxon>Chordata</taxon>
        <taxon>Craniata</taxon>
        <taxon>Vertebrata</taxon>
        <taxon>Euteleostomi</taxon>
        <taxon>Actinopterygii</taxon>
        <taxon>Neopterygii</taxon>
        <taxon>Teleostei</taxon>
        <taxon>Ostariophysi</taxon>
        <taxon>Cypriniformes</taxon>
        <taxon>Cyprinidae</taxon>
        <taxon>Cyprininae</taxon>
        <taxon>Carassius</taxon>
    </lineage>
</organism>
<comment type="function">
    <text evidence="2 3 5">Component of neuronal acetylcholine receptors (nAChRs) that function as pentameric, ligand-gated cation channels with high calcium permeability among other activities. nAChRs are excitatory neurotrasnmitter receptors formed by a collection of nAChR subunits known to mediate synaptic transmission in the nervous system and the neuromuscular junction. Each nAchR subunit confers differential attributes to channel properties, including activation, deactivation and desensitization kinetics, pH sensitivity, cation permeability, and binding to allosteric modulators (By similarity). CHRNA3 forms heteropentameric neuronal acetylcholine receptors with CHRNB2 and CHRNB4 (By similarity). CHRNA3:CHRNB4 being predominant in neurons of the autonomic ganglia, it is known as ganglionic nicotinic receptor (By similarity). CHRNA3:CHRNB4 also plays an important role in the habenulo-interpeduncular tract, modulating the mesolimbic dopamine system and affecting reward circuits and addiction (By similarity). Hypothalamic CHRNA3:CHRNB4 nAChR activation by nicotine leads to activation of POMC neurons and a decrease in food intake (By similarity). Also expressed in the urothelium where it modulates reflex bladder activity by increasing intracellular calcium through extracellular influx and basal ATP release (By similarity).</text>
</comment>
<comment type="catalytic activity">
    <reaction evidence="1">
        <text>K(+)(in) = K(+)(out)</text>
        <dbReference type="Rhea" id="RHEA:29463"/>
        <dbReference type="ChEBI" id="CHEBI:29103"/>
    </reaction>
</comment>
<comment type="catalytic activity">
    <reaction evidence="4">
        <text>Na(+)(in) = Na(+)(out)</text>
        <dbReference type="Rhea" id="RHEA:34963"/>
        <dbReference type="ChEBI" id="CHEBI:29101"/>
    </reaction>
</comment>
<comment type="catalytic activity">
    <reaction evidence="2">
        <text>Ca(2+)(in) = Ca(2+)(out)</text>
        <dbReference type="Rhea" id="RHEA:29671"/>
        <dbReference type="ChEBI" id="CHEBI:29108"/>
    </reaction>
</comment>
<comment type="activity regulation">
    <text evidence="2 3">Activated by a myriad of ligands such as acetylcholine, cytisine, nicotine, choline and epibatidine (By similarity). The heteropentamer CHRNA3:CHRNB2 activity is blocked by alpha-conotoxins ImI, ImII, PnIA, GID and MII (By similarity). The heteropentamer CHRNA3:CHRNB4 activity is blocked by the alpha-conotoxin ImI and AuIB (By similarity).</text>
</comment>
<comment type="subunit">
    <text evidence="3">Neuronal AChR is composed of two different types of subunits: alpha and beta. CHRNA3/Alpha-3 subunit can be combined to CHRNB2/beta-2 or CHRNB4/beta-4 to give rise to functional receptors.</text>
</comment>
<comment type="subcellular location">
    <subcellularLocation>
        <location evidence="2">Synaptic cell membrane</location>
        <topology evidence="6">Multi-pass membrane protein</topology>
    </subcellularLocation>
    <subcellularLocation>
        <location evidence="3">Cell membrane</location>
        <topology evidence="6">Multi-pass membrane protein</topology>
    </subcellularLocation>
    <subcellularLocation>
        <location evidence="2">Endoplasmic reticulum</location>
    </subcellularLocation>
    <subcellularLocation>
        <location evidence="2">Golgi apparatus</location>
    </subcellularLocation>
    <text evidence="2">Interaction with UBXN2A/UBXD4 promotes translocation to the plasma membrane.</text>
</comment>
<comment type="tissue specificity">
    <text evidence="8">Expressed in retina and brain.</text>
</comment>
<comment type="similarity">
    <text evidence="9">Belongs to the ligand-gated ion channel (TC 1.A.9) family. Acetylcholine receptor (TC 1.A.9.1) subfamily. Alpha-3/CHRNA3 sub-subfamily.</text>
</comment>
<name>ACHA3_CARAU</name>
<protein>
    <recommendedName>
        <fullName>Neuronal acetylcholine receptor subunit alpha-3</fullName>
    </recommendedName>
    <alternativeName>
        <fullName>GF-alpha-3</fullName>
    </alternativeName>
</protein>
<keyword id="KW-1003">Cell membrane</keyword>
<keyword id="KW-1015">Disulfide bond</keyword>
<keyword id="KW-0256">Endoplasmic reticulum</keyword>
<keyword id="KW-0325">Glycoprotein</keyword>
<keyword id="KW-0333">Golgi apparatus</keyword>
<keyword id="KW-0407">Ion channel</keyword>
<keyword id="KW-0406">Ion transport</keyword>
<keyword id="KW-1071">Ligand-gated ion channel</keyword>
<keyword id="KW-0472">Membrane</keyword>
<keyword id="KW-0479">Metal-binding</keyword>
<keyword id="KW-0675">Receptor</keyword>
<keyword id="KW-1185">Reference proteome</keyword>
<keyword id="KW-0732">Signal</keyword>
<keyword id="KW-0915">Sodium</keyword>
<keyword id="KW-0770">Synapse</keyword>
<keyword id="KW-0812">Transmembrane</keyword>
<keyword id="KW-1133">Transmembrane helix</keyword>
<keyword id="KW-0813">Transport</keyword>
<evidence type="ECO:0000250" key="1">
    <source>
        <dbReference type="UniProtKB" id="P02709"/>
    </source>
</evidence>
<evidence type="ECO:0000250" key="2">
    <source>
        <dbReference type="UniProtKB" id="P04757"/>
    </source>
</evidence>
<evidence type="ECO:0000250" key="3">
    <source>
        <dbReference type="UniProtKB" id="P32297"/>
    </source>
</evidence>
<evidence type="ECO:0000250" key="4">
    <source>
        <dbReference type="UniProtKB" id="P43681"/>
    </source>
</evidence>
<evidence type="ECO:0000250" key="5">
    <source>
        <dbReference type="UniProtKB" id="Q8R4G9"/>
    </source>
</evidence>
<evidence type="ECO:0000255" key="6"/>
<evidence type="ECO:0000256" key="7">
    <source>
        <dbReference type="SAM" id="MobiDB-lite"/>
    </source>
</evidence>
<evidence type="ECO:0000269" key="8">
    <source>
    </source>
</evidence>
<evidence type="ECO:0000305" key="9"/>
<proteinExistence type="evidence at transcript level"/>